<reference key="1">
    <citation type="journal article" date="2005" name="BMC Biol.">
        <title>The sequence of rice chromosomes 11 and 12, rich in disease resistance genes and recent gene duplications.</title>
        <authorList>
            <consortium name="The rice chromosomes 11 and 12 sequencing consortia"/>
        </authorList>
    </citation>
    <scope>NUCLEOTIDE SEQUENCE [LARGE SCALE GENOMIC DNA]</scope>
    <source>
        <strain>cv. Nipponbare</strain>
    </source>
</reference>
<reference key="2">
    <citation type="journal article" date="2005" name="Nature">
        <title>The map-based sequence of the rice genome.</title>
        <authorList>
            <consortium name="International rice genome sequencing project (IRGSP)"/>
        </authorList>
    </citation>
    <scope>NUCLEOTIDE SEQUENCE [LARGE SCALE GENOMIC DNA]</scope>
    <source>
        <strain>cv. Nipponbare</strain>
    </source>
</reference>
<reference key="3">
    <citation type="journal article" date="2008" name="Nucleic Acids Res.">
        <title>The rice annotation project database (RAP-DB): 2008 update.</title>
        <authorList>
            <consortium name="The rice annotation project (RAP)"/>
        </authorList>
    </citation>
    <scope>GENOME REANNOTATION</scope>
    <source>
        <strain>cv. Nipponbare</strain>
    </source>
</reference>
<reference key="4">
    <citation type="journal article" date="2013" name="Rice">
        <title>Improvement of the Oryza sativa Nipponbare reference genome using next generation sequence and optical map data.</title>
        <authorList>
            <person name="Kawahara Y."/>
            <person name="de la Bastide M."/>
            <person name="Hamilton J.P."/>
            <person name="Kanamori H."/>
            <person name="McCombie W.R."/>
            <person name="Ouyang S."/>
            <person name="Schwartz D.C."/>
            <person name="Tanaka T."/>
            <person name="Wu J."/>
            <person name="Zhou S."/>
            <person name="Childs K.L."/>
            <person name="Davidson R.M."/>
            <person name="Lin H."/>
            <person name="Quesada-Ocampo L."/>
            <person name="Vaillancourt B."/>
            <person name="Sakai H."/>
            <person name="Lee S.S."/>
            <person name="Kim J."/>
            <person name="Numa H."/>
            <person name="Itoh T."/>
            <person name="Buell C.R."/>
            <person name="Matsumoto T."/>
        </authorList>
    </citation>
    <scope>GENOME REANNOTATION</scope>
    <source>
        <strain>cv. Nipponbare</strain>
    </source>
</reference>
<reference key="5">
    <citation type="journal article" date="2008" name="RNA">
        <title>Two CRM protein subfamilies cooperate in the splicing of group IIB introns in chloroplasts.</title>
        <authorList>
            <person name="Asakura Y."/>
            <person name="Bayraktar O.A."/>
            <person name="Barkan A."/>
        </authorList>
    </citation>
    <scope>FUNCTION</scope>
    <scope>SUBCELLULAR LOCATION</scope>
    <scope>DISRUPTION PHENOTYPE</scope>
</reference>
<evidence type="ECO:0000250" key="1">
    <source>
        <dbReference type="UniProtKB" id="A7XN92"/>
    </source>
</evidence>
<evidence type="ECO:0000250" key="2">
    <source>
        <dbReference type="UniProtKB" id="F4J2U9"/>
    </source>
</evidence>
<evidence type="ECO:0000255" key="3"/>
<evidence type="ECO:0000255" key="4">
    <source>
        <dbReference type="PROSITE-ProRule" id="PRU00626"/>
    </source>
</evidence>
<evidence type="ECO:0000256" key="5">
    <source>
        <dbReference type="SAM" id="MobiDB-lite"/>
    </source>
</evidence>
<evidence type="ECO:0000269" key="6">
    <source>
    </source>
</evidence>
<evidence type="ECO:0000303" key="7">
    <source>
    </source>
</evidence>
<evidence type="ECO:0000305" key="8"/>
<evidence type="ECO:0000312" key="9">
    <source>
        <dbReference type="EMBL" id="ABA94534.1"/>
    </source>
</evidence>
<evidence type="ECO:0000312" key="10">
    <source>
        <dbReference type="EMBL" id="BAF28555.2"/>
    </source>
</evidence>
<evidence type="ECO:0000312" key="11">
    <source>
        <dbReference type="EMBL" id="BAT14685.1"/>
    </source>
</evidence>
<name>CFM3_ORYSJ</name>
<comment type="function">
    <text evidence="2 6">Binds specific group II introns in chloroplasts and facilitates their splicing. Acts on subgroup IIB introns. The substrates of the subgroup IIB also require the CRM domain proteins CAF1 or CAF2, with a simultaneous binding of CFM3 and CAF1 or CAF2 (PubMed:18799595). May influence the biogenesis of the mitochondrial small ribosomal subunit (By similarity).</text>
</comment>
<comment type="subunit">
    <text evidence="1">Interacts with RNA. Part of large ribonucleo-protein particles that contain CAF1 and/or CAF2, and RNC1.</text>
</comment>
<comment type="subcellular location">
    <subcellularLocation>
        <location evidence="6">Plastid</location>
        <location evidence="6">Chloroplast</location>
    </subcellularLocation>
    <subcellularLocation>
        <location evidence="6">Mitochondrion</location>
    </subcellularLocation>
</comment>
<comment type="disruption phenotype">
    <text evidence="6">Albino leaves with little, if any, plastid rRNA.</text>
</comment>
<comment type="sequence caution" evidence="8">
    <conflict type="erroneous gene model prediction">
        <sequence resource="EMBL-CDS" id="BAF28555"/>
    </conflict>
</comment>
<keyword id="KW-0150">Chloroplast</keyword>
<keyword id="KW-0175">Coiled coil</keyword>
<keyword id="KW-0496">Mitochondrion</keyword>
<keyword id="KW-0507">mRNA processing</keyword>
<keyword id="KW-0508">mRNA splicing</keyword>
<keyword id="KW-0934">Plastid</keyword>
<keyword id="KW-1185">Reference proteome</keyword>
<keyword id="KW-0677">Repeat</keyword>
<keyword id="KW-0687">Ribonucleoprotein</keyword>
<keyword id="KW-0694">RNA-binding</keyword>
<keyword id="KW-0809">Transit peptide</keyword>
<feature type="transit peptide" description="Chloroplast and mitochondrion" evidence="3">
    <location>
        <begin position="1"/>
        <end position="70"/>
    </location>
</feature>
<feature type="chain" id="PRO_0000435535" description="CRM-domain containing factor CFM3, chloroplastic/mitochondrial">
    <location>
        <begin position="71"/>
        <end position="886"/>
    </location>
</feature>
<feature type="domain" description="CRM 1" evidence="4">
    <location>
        <begin position="174"/>
        <end position="270"/>
    </location>
</feature>
<feature type="domain" description="CRM 2" evidence="4">
    <location>
        <begin position="378"/>
        <end position="475"/>
    </location>
</feature>
<feature type="domain" description="CRM 3" evidence="4">
    <location>
        <begin position="590"/>
        <end position="690"/>
    </location>
</feature>
<feature type="region of interest" description="Disordered" evidence="5">
    <location>
        <begin position="56"/>
        <end position="84"/>
    </location>
</feature>
<feature type="region of interest" description="Disordered" evidence="5">
    <location>
        <begin position="269"/>
        <end position="291"/>
    </location>
</feature>
<feature type="region of interest" description="Disordered" evidence="5">
    <location>
        <begin position="771"/>
        <end position="886"/>
    </location>
</feature>
<feature type="compositionally biased region" description="Polar residues" evidence="5">
    <location>
        <begin position="270"/>
        <end position="281"/>
    </location>
</feature>
<feature type="compositionally biased region" description="Acidic residues" evidence="5">
    <location>
        <begin position="793"/>
        <end position="827"/>
    </location>
</feature>
<feature type="compositionally biased region" description="Polar residues" evidence="5">
    <location>
        <begin position="841"/>
        <end position="852"/>
    </location>
</feature>
<feature type="compositionally biased region" description="Polar residues" evidence="5">
    <location>
        <begin position="869"/>
        <end position="886"/>
    </location>
</feature>
<proteinExistence type="inferred from homology"/>
<gene>
    <name evidence="7" type="primary">CFM3</name>
    <name evidence="10" type="ordered locus">Os11g0592400</name>
    <name evidence="9" type="ordered locus">LOC_Os11g37990</name>
    <name evidence="11" type="ORF">OSNPB_110592400</name>
</gene>
<protein>
    <recommendedName>
        <fullName evidence="8">CRM-domain containing factor CFM3, chloroplastic/mitochondrial</fullName>
    </recommendedName>
    <alternativeName>
        <fullName evidence="7">Protein CRM FAMILY MEMBER 3</fullName>
        <shortName evidence="7">OsCFM3</shortName>
    </alternativeName>
</protein>
<dbReference type="EMBL" id="DP000010">
    <property type="protein sequence ID" value="ABA94534.1"/>
    <property type="molecule type" value="Genomic_DNA"/>
</dbReference>
<dbReference type="EMBL" id="AP008217">
    <property type="protein sequence ID" value="BAF28555.2"/>
    <property type="status" value="ALT_SEQ"/>
    <property type="molecule type" value="Genomic_DNA"/>
</dbReference>
<dbReference type="EMBL" id="AP014967">
    <property type="protein sequence ID" value="BAT14685.1"/>
    <property type="molecule type" value="Genomic_DNA"/>
</dbReference>
<dbReference type="RefSeq" id="XP_015616314.1">
    <property type="nucleotide sequence ID" value="XM_015760828.1"/>
</dbReference>
<dbReference type="SMR" id="Q2R1U8"/>
<dbReference type="FunCoup" id="Q2R1U8">
    <property type="interactions" value="1790"/>
</dbReference>
<dbReference type="STRING" id="39947.Q2R1U8"/>
<dbReference type="PaxDb" id="39947-Q2R1U8"/>
<dbReference type="EnsemblPlants" id="Os11t0592400-01">
    <property type="protein sequence ID" value="Os11t0592400-01"/>
    <property type="gene ID" value="Os11g0592400"/>
</dbReference>
<dbReference type="Gramene" id="Os11t0592400-01">
    <property type="protein sequence ID" value="Os11t0592400-01"/>
    <property type="gene ID" value="Os11g0592400"/>
</dbReference>
<dbReference type="KEGG" id="dosa:Os11g0592400"/>
<dbReference type="eggNOG" id="KOG1990">
    <property type="taxonomic scope" value="Eukaryota"/>
</dbReference>
<dbReference type="HOGENOM" id="CLU_006310_3_1_1"/>
<dbReference type="InParanoid" id="Q2R1U8"/>
<dbReference type="OMA" id="KVRFPWE"/>
<dbReference type="OrthoDB" id="551352at2759"/>
<dbReference type="Proteomes" id="UP000000763">
    <property type="component" value="Chromosome 11"/>
</dbReference>
<dbReference type="Proteomes" id="UP000059680">
    <property type="component" value="Chromosome 11"/>
</dbReference>
<dbReference type="GO" id="GO:0009507">
    <property type="term" value="C:chloroplast"/>
    <property type="evidence" value="ECO:0000314"/>
    <property type="project" value="UniProtKB"/>
</dbReference>
<dbReference type="GO" id="GO:0005739">
    <property type="term" value="C:mitochondrion"/>
    <property type="evidence" value="ECO:0000314"/>
    <property type="project" value="UniProtKB"/>
</dbReference>
<dbReference type="GO" id="GO:1990904">
    <property type="term" value="C:ribonucleoprotein complex"/>
    <property type="evidence" value="ECO:0007669"/>
    <property type="project" value="UniProtKB-KW"/>
</dbReference>
<dbReference type="GO" id="GO:0003729">
    <property type="term" value="F:mRNA binding"/>
    <property type="evidence" value="ECO:0007669"/>
    <property type="project" value="InterPro"/>
</dbReference>
<dbReference type="GO" id="GO:0000373">
    <property type="term" value="P:Group II intron splicing"/>
    <property type="evidence" value="ECO:0000315"/>
    <property type="project" value="UniProtKB"/>
</dbReference>
<dbReference type="GO" id="GO:0006397">
    <property type="term" value="P:mRNA processing"/>
    <property type="evidence" value="ECO:0007669"/>
    <property type="project" value="UniProtKB-KW"/>
</dbReference>
<dbReference type="FunFam" id="3.30.110.60:FF:000003">
    <property type="entry name" value="CRM-domain containing factor CFM3B, chloroplastic"/>
    <property type="match status" value="1"/>
</dbReference>
<dbReference type="FunFam" id="3.30.110.60:FF:000002">
    <property type="entry name" value="CRS2-associated factor 1, chloroplastic"/>
    <property type="match status" value="2"/>
</dbReference>
<dbReference type="Gene3D" id="3.30.110.60">
    <property type="entry name" value="YhbY-like"/>
    <property type="match status" value="3"/>
</dbReference>
<dbReference type="InterPro" id="IPR045278">
    <property type="entry name" value="CRS1/CFM2/CFM3"/>
</dbReference>
<dbReference type="InterPro" id="IPR001890">
    <property type="entry name" value="RNA-binding_CRM"/>
</dbReference>
<dbReference type="InterPro" id="IPR035920">
    <property type="entry name" value="YhbY-like_sf"/>
</dbReference>
<dbReference type="PANTHER" id="PTHR31846:SF19">
    <property type="entry name" value="CRM-DOMAIN CONTAINING FACTOR CFM3A, CHLOROPLASTIC_MITOCHONDRIAL"/>
    <property type="match status" value="1"/>
</dbReference>
<dbReference type="PANTHER" id="PTHR31846">
    <property type="entry name" value="CRS1 / YHBY (CRM) DOMAIN-CONTAINING PROTEIN"/>
    <property type="match status" value="1"/>
</dbReference>
<dbReference type="Pfam" id="PF01985">
    <property type="entry name" value="CRS1_YhbY"/>
    <property type="match status" value="3"/>
</dbReference>
<dbReference type="SMART" id="SM01103">
    <property type="entry name" value="CRS1_YhbY"/>
    <property type="match status" value="3"/>
</dbReference>
<dbReference type="SUPFAM" id="SSF75471">
    <property type="entry name" value="YhbY-like"/>
    <property type="match status" value="3"/>
</dbReference>
<dbReference type="PROSITE" id="PS51295">
    <property type="entry name" value="CRM"/>
    <property type="match status" value="3"/>
</dbReference>
<organism evidence="9">
    <name type="scientific">Oryza sativa subsp. japonica</name>
    <name type="common">Rice</name>
    <dbReference type="NCBI Taxonomy" id="39947"/>
    <lineage>
        <taxon>Eukaryota</taxon>
        <taxon>Viridiplantae</taxon>
        <taxon>Streptophyta</taxon>
        <taxon>Embryophyta</taxon>
        <taxon>Tracheophyta</taxon>
        <taxon>Spermatophyta</taxon>
        <taxon>Magnoliopsida</taxon>
        <taxon>Liliopsida</taxon>
        <taxon>Poales</taxon>
        <taxon>Poaceae</taxon>
        <taxon>BOP clade</taxon>
        <taxon>Oryzoideae</taxon>
        <taxon>Oryzeae</taxon>
        <taxon>Oryzinae</taxon>
        <taxon>Oryza</taxon>
        <taxon>Oryza sativa</taxon>
    </lineage>
</organism>
<sequence>MAAAAMAISPSIHLHLHLHLHHPPRLHRLLHLSTTSPYPWLSAWPTAHRRRVPLRRPASALDLRPEPSPSSDSDDDAAFGTSRSSSRSAMSLILSRLRNSGYSYSPPELPPRPPRGSVEDVFRVDDGVVPNARGGFDDDAESALVDARFPWELPMPPPEAGPRAARSKAWMAELTLPEAELRRLRHAGMRLKSRIKVGGAGVTREIVERIRDRWRNDEVVRIKVTGTPALNMRLFHEILERKTGGLVIWRSGTSVSLYRGVAYDIPEPTKGTSKNTQTLGMKSSIKEPPGHSLLPNEKVNEMQDNNGALVSNAEKDTLVEPVPEIKYEDEIDKLLDELGPRYDDWPRPDPSPVDADLLPATVPGYKPPFRVLPYGVRPSLSRRDTTNLRRLARGLPPHFALGRSRQLQGLAAAMVKLWEKSSIAKIALKRGVQLTTSERMAEDIKKLTGGVMLSRNNDFMVFYRGKDFLSPELAEKLLERERWAKSLQDEEQARLNAASSFSSRTEAPVEPTVAGTLGETLEANSKYGNKLDENYENKMTRTVEAARHADLVRKLEWKLQLAQKKIEKAERVLGKVETALKPTEGIQPPETITDEERFMFRKLGLRMKAFLLLGRRGVFDGTIENMHLHWKYRELVKILVKAKSFGDVKKIALSLEAESGGILVSVDKVSKGYAIVVFRGKDYARPSKLRPRNLLSKRKALARSIEIQRREALSHHIATLNRRVKKLKAELLQMEGVKEEGDVELYAKLDSAYSSDEEDVEDEDDEAYLRSFDNSVAVQNGDDRTSLDGSDANSDDEGDYSDEDDDEDDDNDEEDGFDYENDDEDDVPPTTSDGDLYNHTDFGSSDSENYVSLSGRGDPDVKSKGSALDSRNSYSEQSTELTNTCS</sequence>
<accession>Q2R1U8</accession>
<accession>Q0IRW0</accession>